<comment type="catalytic activity">
    <reaction evidence="1">
        <text>tRNA(Asn) + L-asparagine + ATP = L-asparaginyl-tRNA(Asn) + AMP + diphosphate + H(+)</text>
        <dbReference type="Rhea" id="RHEA:11180"/>
        <dbReference type="Rhea" id="RHEA-COMP:9659"/>
        <dbReference type="Rhea" id="RHEA-COMP:9674"/>
        <dbReference type="ChEBI" id="CHEBI:15378"/>
        <dbReference type="ChEBI" id="CHEBI:30616"/>
        <dbReference type="ChEBI" id="CHEBI:33019"/>
        <dbReference type="ChEBI" id="CHEBI:58048"/>
        <dbReference type="ChEBI" id="CHEBI:78442"/>
        <dbReference type="ChEBI" id="CHEBI:78515"/>
        <dbReference type="ChEBI" id="CHEBI:456215"/>
        <dbReference type="EC" id="6.1.1.22"/>
    </reaction>
</comment>
<comment type="subunit">
    <text evidence="1">Homodimer.</text>
</comment>
<comment type="subcellular location">
    <subcellularLocation>
        <location>Cytoplasm</location>
    </subcellularLocation>
</comment>
<comment type="similarity">
    <text evidence="1">Belongs to the class-II aminoacyl-tRNA synthetase family.</text>
</comment>
<organism>
    <name type="scientific">Xanthomonas euvesicatoria pv. vesicatoria (strain 85-10)</name>
    <name type="common">Xanthomonas campestris pv. vesicatoria</name>
    <dbReference type="NCBI Taxonomy" id="316273"/>
    <lineage>
        <taxon>Bacteria</taxon>
        <taxon>Pseudomonadati</taxon>
        <taxon>Pseudomonadota</taxon>
        <taxon>Gammaproteobacteria</taxon>
        <taxon>Lysobacterales</taxon>
        <taxon>Lysobacteraceae</taxon>
        <taxon>Xanthomonas</taxon>
    </lineage>
</organism>
<feature type="chain" id="PRO_1000051455" description="Asparagine--tRNA ligase">
    <location>
        <begin position="1"/>
        <end position="464"/>
    </location>
</feature>
<dbReference type="EC" id="6.1.1.22" evidence="1"/>
<dbReference type="EMBL" id="AM039952">
    <property type="protein sequence ID" value="CAJ23336.1"/>
    <property type="molecule type" value="Genomic_DNA"/>
</dbReference>
<dbReference type="RefSeq" id="WP_011347025.1">
    <property type="nucleotide sequence ID" value="NZ_CP017190.1"/>
</dbReference>
<dbReference type="SMR" id="Q3BV23"/>
<dbReference type="STRING" id="456327.BJD11_14290"/>
<dbReference type="GeneID" id="63990893"/>
<dbReference type="KEGG" id="xcv:XCV1659"/>
<dbReference type="eggNOG" id="COG0017">
    <property type="taxonomic scope" value="Bacteria"/>
</dbReference>
<dbReference type="HOGENOM" id="CLU_004553_2_0_6"/>
<dbReference type="Proteomes" id="UP000007069">
    <property type="component" value="Chromosome"/>
</dbReference>
<dbReference type="GO" id="GO:0005737">
    <property type="term" value="C:cytoplasm"/>
    <property type="evidence" value="ECO:0007669"/>
    <property type="project" value="UniProtKB-SubCell"/>
</dbReference>
<dbReference type="GO" id="GO:0004816">
    <property type="term" value="F:asparagine-tRNA ligase activity"/>
    <property type="evidence" value="ECO:0007669"/>
    <property type="project" value="UniProtKB-UniRule"/>
</dbReference>
<dbReference type="GO" id="GO:0005524">
    <property type="term" value="F:ATP binding"/>
    <property type="evidence" value="ECO:0007669"/>
    <property type="project" value="UniProtKB-UniRule"/>
</dbReference>
<dbReference type="GO" id="GO:0003676">
    <property type="term" value="F:nucleic acid binding"/>
    <property type="evidence" value="ECO:0007669"/>
    <property type="project" value="InterPro"/>
</dbReference>
<dbReference type="GO" id="GO:0006421">
    <property type="term" value="P:asparaginyl-tRNA aminoacylation"/>
    <property type="evidence" value="ECO:0007669"/>
    <property type="project" value="UniProtKB-UniRule"/>
</dbReference>
<dbReference type="CDD" id="cd00776">
    <property type="entry name" value="AsxRS_core"/>
    <property type="match status" value="1"/>
</dbReference>
<dbReference type="CDD" id="cd04318">
    <property type="entry name" value="EcAsnRS_like_N"/>
    <property type="match status" value="1"/>
</dbReference>
<dbReference type="FunFam" id="3.30.930.10:FF:000016">
    <property type="entry name" value="Asparagine--tRNA ligase"/>
    <property type="match status" value="1"/>
</dbReference>
<dbReference type="Gene3D" id="3.30.930.10">
    <property type="entry name" value="Bira Bifunctional Protein, Domain 2"/>
    <property type="match status" value="1"/>
</dbReference>
<dbReference type="Gene3D" id="2.40.50.140">
    <property type="entry name" value="Nucleic acid-binding proteins"/>
    <property type="match status" value="1"/>
</dbReference>
<dbReference type="HAMAP" id="MF_00534">
    <property type="entry name" value="Asn_tRNA_synth"/>
    <property type="match status" value="1"/>
</dbReference>
<dbReference type="InterPro" id="IPR004364">
    <property type="entry name" value="Aa-tRNA-synt_II"/>
</dbReference>
<dbReference type="InterPro" id="IPR006195">
    <property type="entry name" value="aa-tRNA-synth_II"/>
</dbReference>
<dbReference type="InterPro" id="IPR045864">
    <property type="entry name" value="aa-tRNA-synth_II/BPL/LPL"/>
</dbReference>
<dbReference type="InterPro" id="IPR004522">
    <property type="entry name" value="Asn-tRNA-ligase"/>
</dbReference>
<dbReference type="InterPro" id="IPR002312">
    <property type="entry name" value="Asp/Asn-tRNA-synth_IIb"/>
</dbReference>
<dbReference type="InterPro" id="IPR012340">
    <property type="entry name" value="NA-bd_OB-fold"/>
</dbReference>
<dbReference type="InterPro" id="IPR004365">
    <property type="entry name" value="NA-bd_OB_tRNA"/>
</dbReference>
<dbReference type="NCBIfam" id="TIGR00457">
    <property type="entry name" value="asnS"/>
    <property type="match status" value="1"/>
</dbReference>
<dbReference type="NCBIfam" id="NF003037">
    <property type="entry name" value="PRK03932.1"/>
    <property type="match status" value="1"/>
</dbReference>
<dbReference type="PANTHER" id="PTHR22594:SF34">
    <property type="entry name" value="ASPARAGINE--TRNA LIGASE, MITOCHONDRIAL-RELATED"/>
    <property type="match status" value="1"/>
</dbReference>
<dbReference type="PANTHER" id="PTHR22594">
    <property type="entry name" value="ASPARTYL/LYSYL-TRNA SYNTHETASE"/>
    <property type="match status" value="1"/>
</dbReference>
<dbReference type="Pfam" id="PF00152">
    <property type="entry name" value="tRNA-synt_2"/>
    <property type="match status" value="1"/>
</dbReference>
<dbReference type="Pfam" id="PF01336">
    <property type="entry name" value="tRNA_anti-codon"/>
    <property type="match status" value="1"/>
</dbReference>
<dbReference type="PRINTS" id="PR01042">
    <property type="entry name" value="TRNASYNTHASP"/>
</dbReference>
<dbReference type="SUPFAM" id="SSF55681">
    <property type="entry name" value="Class II aaRS and biotin synthetases"/>
    <property type="match status" value="1"/>
</dbReference>
<dbReference type="SUPFAM" id="SSF50249">
    <property type="entry name" value="Nucleic acid-binding proteins"/>
    <property type="match status" value="1"/>
</dbReference>
<dbReference type="PROSITE" id="PS50862">
    <property type="entry name" value="AA_TRNA_LIGASE_II"/>
    <property type="match status" value="1"/>
</dbReference>
<accession>Q3BV23</accession>
<proteinExistence type="inferred from homology"/>
<name>SYN_XANE5</name>
<reference key="1">
    <citation type="journal article" date="2005" name="J. Bacteriol.">
        <title>Insights into genome plasticity and pathogenicity of the plant pathogenic Bacterium Xanthomonas campestris pv. vesicatoria revealed by the complete genome sequence.</title>
        <authorList>
            <person name="Thieme F."/>
            <person name="Koebnik R."/>
            <person name="Bekel T."/>
            <person name="Berger C."/>
            <person name="Boch J."/>
            <person name="Buettner D."/>
            <person name="Caldana C."/>
            <person name="Gaigalat L."/>
            <person name="Goesmann A."/>
            <person name="Kay S."/>
            <person name="Kirchner O."/>
            <person name="Lanz C."/>
            <person name="Linke B."/>
            <person name="McHardy A.C."/>
            <person name="Meyer F."/>
            <person name="Mittenhuber G."/>
            <person name="Nies D.H."/>
            <person name="Niesbach-Kloesgen U."/>
            <person name="Patschkowski T."/>
            <person name="Rueckert C."/>
            <person name="Rupp O."/>
            <person name="Schneiker S."/>
            <person name="Schuster S.C."/>
            <person name="Vorhoelter F.J."/>
            <person name="Weber E."/>
            <person name="Puehler A."/>
            <person name="Bonas U."/>
            <person name="Bartels D."/>
            <person name="Kaiser O."/>
        </authorList>
    </citation>
    <scope>NUCLEOTIDE SEQUENCE [LARGE SCALE GENOMIC DNA]</scope>
    <source>
        <strain>85-10</strain>
    </source>
</reference>
<gene>
    <name evidence="1" type="primary">asnS</name>
    <name type="ordered locus">XCV1659</name>
</gene>
<keyword id="KW-0030">Aminoacyl-tRNA synthetase</keyword>
<keyword id="KW-0067">ATP-binding</keyword>
<keyword id="KW-0963">Cytoplasm</keyword>
<keyword id="KW-0436">Ligase</keyword>
<keyword id="KW-0547">Nucleotide-binding</keyword>
<keyword id="KW-0648">Protein biosynthesis</keyword>
<evidence type="ECO:0000255" key="1">
    <source>
        <dbReference type="HAMAP-Rule" id="MF_00534"/>
    </source>
</evidence>
<sequence length="464" mass="51926">MTVVSVEHALAGKLPEGGEVTVRGWVRTLRGSAGLAFINVTDGSCFAPIQVVANDTLPNFDEIKRLTSGCSLIAKGVLVKSQGKGQSFEIQASGVEIVGWVEDPLTYPIQPKPMTPEFLREVAHLRPRTNLFGAVTRIRNCLAQAVHRFFHQNGFNWISTPIITTSDAEGAGQMFRVSTLDMVNLPRDASGNVDFSRDFFGKETFLTVSGQLNVEAYCLALSKVYTFGPTFRAENSHTTRHLAEFWMIEPEIAFADLAEDARLAEQFLKYLFRAVLDERGDDLAFLAERVDKNAITKLEAFINAPFEQIDYTEAVKLLQNSGKKFDFPVEWGLDLQTEHERWLTEEHIGRPVVVTNYPEHIKAFYMRLNDDGKTVAAMDVLAPGIGEIIGGSQREERLDVLDARMAQFGLDKEHYSWYRDFRRYGSVPHAGFGLGFERLVVYVCGLSNIRDAIPYPRAPGSAEF</sequence>
<protein>
    <recommendedName>
        <fullName evidence="1">Asparagine--tRNA ligase</fullName>
        <ecNumber evidence="1">6.1.1.22</ecNumber>
    </recommendedName>
    <alternativeName>
        <fullName evidence="1">Asparaginyl-tRNA synthetase</fullName>
        <shortName evidence="1">AsnRS</shortName>
    </alternativeName>
</protein>